<dbReference type="EMBL" id="AP001918">
    <property type="protein sequence ID" value="BAA97894.1"/>
    <property type="molecule type" value="Genomic_DNA"/>
</dbReference>
<dbReference type="RefSeq" id="NP_061403.1">
    <property type="nucleotide sequence ID" value="NC_002483.1"/>
</dbReference>
<dbReference type="SMR" id="Q9JMS7"/>
<dbReference type="GO" id="GO:0005886">
    <property type="term" value="C:plasma membrane"/>
    <property type="evidence" value="ECO:0007669"/>
    <property type="project" value="UniProtKB-SubCell"/>
</dbReference>
<reference key="1">
    <citation type="submission" date="2000-04" db="EMBL/GenBank/DDBJ databases">
        <title>Complete nucleotide sequence of the F plasmid: its implications for organization and diversification of plasmid genomes.</title>
        <authorList>
            <person name="Shimizu H."/>
            <person name="Saitoh Y."/>
            <person name="Suda Y."/>
            <person name="Uehara K."/>
            <person name="Sampei G."/>
            <person name="Mizobuchi K."/>
        </authorList>
    </citation>
    <scope>NUCLEOTIDE SEQUENCE [LARGE SCALE GENOMIC DNA]</scope>
    <source>
        <strain>K12 / CR63</strain>
    </source>
</reference>
<feature type="chain" id="PRO_0000268023" description="Uncharacterized protein YuaM">
    <location>
        <begin position="1"/>
        <end position="231"/>
    </location>
</feature>
<feature type="transmembrane region" description="Helical" evidence="1">
    <location>
        <begin position="39"/>
        <end position="59"/>
    </location>
</feature>
<feature type="transmembrane region" description="Helical" evidence="1">
    <location>
        <begin position="70"/>
        <end position="90"/>
    </location>
</feature>
<feature type="transmembrane region" description="Helical" evidence="1">
    <location>
        <begin position="156"/>
        <end position="176"/>
    </location>
</feature>
<feature type="transmembrane region" description="Helical" evidence="1">
    <location>
        <begin position="189"/>
        <end position="206"/>
    </location>
</feature>
<evidence type="ECO:0000255" key="1"/>
<evidence type="ECO:0000305" key="2"/>
<protein>
    <recommendedName>
        <fullName>Uncharacterized protein YuaM</fullName>
    </recommendedName>
</protein>
<proteinExistence type="inferred from homology"/>
<gene>
    <name type="primary">yuaM</name>
    <name type="synonym">ycaA</name>
    <name type="ordered locus">ECOK12F024</name>
</gene>
<accession>Q9JMS7</accession>
<sequence>MMYRVNHIMRTINEMSSYTPHMKVNRIAERLSKVQKISFCISVISFFLLAIITLTYGPFNTKSNLSFISALSLYFINVIMGVTYLSVPVINTIKYIYNFKGEVVNELIYDIDSDEQHIEALLPYSLEELTYVSNCIQVRIPKIKSKCFLWGGGKTAIISILCLSYSAICIVNGGSIDGIFVGETGDKIIVAIMFFILYTSLMNMFFKQKLLYLQNLKMIIDMTIKIKRNFT</sequence>
<keyword id="KW-1003">Cell membrane</keyword>
<keyword id="KW-0472">Membrane</keyword>
<keyword id="KW-0614">Plasmid</keyword>
<keyword id="KW-0812">Transmembrane</keyword>
<keyword id="KW-1133">Transmembrane helix</keyword>
<name>YUAM_ECOLI</name>
<organism>
    <name type="scientific">Escherichia coli (strain K12)</name>
    <dbReference type="NCBI Taxonomy" id="83333"/>
    <lineage>
        <taxon>Bacteria</taxon>
        <taxon>Pseudomonadati</taxon>
        <taxon>Pseudomonadota</taxon>
        <taxon>Gammaproteobacteria</taxon>
        <taxon>Enterobacterales</taxon>
        <taxon>Enterobacteriaceae</taxon>
        <taxon>Escherichia</taxon>
    </lineage>
</organism>
<geneLocation type="plasmid">
    <name>F</name>
</geneLocation>
<comment type="subcellular location">
    <subcellularLocation>
        <location evidence="2">Cell membrane</location>
        <topology evidence="2">Multi-pass membrane protein</topology>
    </subcellularLocation>
</comment>
<comment type="similarity">
    <text evidence="2">Belongs to the FliR/MopE/SpaR family.</text>
</comment>